<feature type="chain" id="PRO_0000214057" description="Putative pirin-like protein At3g59260">
    <location>
        <begin position="1"/>
        <end position="271"/>
    </location>
</feature>
<accession>Q9LX45</accession>
<comment type="subcellular location">
    <subcellularLocation>
        <location evidence="1">Nucleus</location>
    </subcellularLocation>
</comment>
<comment type="similarity">
    <text evidence="2">Belongs to the pirin family.</text>
</comment>
<dbReference type="EMBL" id="AL356014">
    <property type="protein sequence ID" value="CAB91596.1"/>
    <property type="molecule type" value="Genomic_DNA"/>
</dbReference>
<dbReference type="EMBL" id="CP002686">
    <property type="protein sequence ID" value="AEE79897.1"/>
    <property type="molecule type" value="Genomic_DNA"/>
</dbReference>
<dbReference type="PIR" id="T48994">
    <property type="entry name" value="T48994"/>
</dbReference>
<dbReference type="RefSeq" id="NP_191485.1">
    <property type="nucleotide sequence ID" value="NM_115788.1"/>
</dbReference>
<dbReference type="SMR" id="Q9LX45"/>
<dbReference type="FunCoup" id="Q9LX45">
    <property type="interactions" value="41"/>
</dbReference>
<dbReference type="STRING" id="3702.Q9LX45"/>
<dbReference type="PaxDb" id="3702-AT3G59260.1"/>
<dbReference type="ProteomicsDB" id="234850"/>
<dbReference type="EnsemblPlants" id="AT3G59260.1">
    <property type="protein sequence ID" value="AT3G59260.1"/>
    <property type="gene ID" value="AT3G59260"/>
</dbReference>
<dbReference type="GeneID" id="825095"/>
<dbReference type="Gramene" id="AT3G59260.1">
    <property type="protein sequence ID" value="AT3G59260.1"/>
    <property type="gene ID" value="AT3G59260"/>
</dbReference>
<dbReference type="KEGG" id="ath:AT3G59260"/>
<dbReference type="Araport" id="AT3G59260"/>
<dbReference type="TAIR" id="AT3G59260"/>
<dbReference type="eggNOG" id="ENOG502QQ5A">
    <property type="taxonomic scope" value="Eukaryota"/>
</dbReference>
<dbReference type="HOGENOM" id="CLU_045717_5_2_1"/>
<dbReference type="InParanoid" id="Q9LX45"/>
<dbReference type="OMA" id="QDFNGHK"/>
<dbReference type="PhylomeDB" id="Q9LX45"/>
<dbReference type="PRO" id="PR:Q9LX45"/>
<dbReference type="Proteomes" id="UP000006548">
    <property type="component" value="Chromosome 3"/>
</dbReference>
<dbReference type="ExpressionAtlas" id="Q9LX45">
    <property type="expression patterns" value="baseline and differential"/>
</dbReference>
<dbReference type="GO" id="GO:0005634">
    <property type="term" value="C:nucleus"/>
    <property type="evidence" value="ECO:0007669"/>
    <property type="project" value="UniProtKB-SubCell"/>
</dbReference>
<dbReference type="CDD" id="cd02247">
    <property type="entry name" value="cupin_pirin_C"/>
    <property type="match status" value="1"/>
</dbReference>
<dbReference type="CDD" id="cd02909">
    <property type="entry name" value="cupin_pirin_N"/>
    <property type="match status" value="1"/>
</dbReference>
<dbReference type="Gene3D" id="2.60.120.10">
    <property type="entry name" value="Jelly Rolls"/>
    <property type="match status" value="2"/>
</dbReference>
<dbReference type="InterPro" id="IPR012093">
    <property type="entry name" value="Pirin"/>
</dbReference>
<dbReference type="InterPro" id="IPR008778">
    <property type="entry name" value="Pirin_C_dom"/>
</dbReference>
<dbReference type="InterPro" id="IPR003829">
    <property type="entry name" value="Pirin_N_dom"/>
</dbReference>
<dbReference type="InterPro" id="IPR014710">
    <property type="entry name" value="RmlC-like_jellyroll"/>
</dbReference>
<dbReference type="InterPro" id="IPR011051">
    <property type="entry name" value="RmlC_Cupin_sf"/>
</dbReference>
<dbReference type="PANTHER" id="PTHR13903:SF20">
    <property type="entry name" value="BNAC08G48910D PROTEIN"/>
    <property type="match status" value="1"/>
</dbReference>
<dbReference type="PANTHER" id="PTHR13903">
    <property type="entry name" value="PIRIN-RELATED"/>
    <property type="match status" value="1"/>
</dbReference>
<dbReference type="Pfam" id="PF02678">
    <property type="entry name" value="Pirin"/>
    <property type="match status" value="1"/>
</dbReference>
<dbReference type="Pfam" id="PF05726">
    <property type="entry name" value="Pirin_C"/>
    <property type="match status" value="1"/>
</dbReference>
<dbReference type="PIRSF" id="PIRSF006232">
    <property type="entry name" value="Pirin"/>
    <property type="match status" value="1"/>
</dbReference>
<dbReference type="SUPFAM" id="SSF51182">
    <property type="entry name" value="RmlC-like cupins"/>
    <property type="match status" value="1"/>
</dbReference>
<proteinExistence type="inferred from homology"/>
<sequence length="271" mass="29822">MKVMVLSLGKASPSKSDHELLDPFVSLVEFSVSPPGGFKDHPHRGFESVTYMFQGGIIHQDCNGNKGTIHEGDVQWMTAGRGIIHSEMPEEQVNKGLQLWINLPSSAKMIEPKNIEISSSEIPSADDYGVEVKVIAGESMGVKSPFYTKTPIMFLDFTLDPKAQTHQAVPESWTAFAYIVEGDEGVFSSSDSSTVQAHNVVVFGTGDEVSVWNTSNSRPLRFLLIAGEPIGEPVVQHGPFVMNSQDEIEMTIGDYRNGMNGFEMAKHWRSE</sequence>
<evidence type="ECO:0000250" key="1"/>
<evidence type="ECO:0000305" key="2"/>
<keyword id="KW-0539">Nucleus</keyword>
<keyword id="KW-1185">Reference proteome</keyword>
<gene>
    <name type="ordered locus">At3g59260</name>
    <name type="ORF">F25L23_120</name>
</gene>
<organism>
    <name type="scientific">Arabidopsis thaliana</name>
    <name type="common">Mouse-ear cress</name>
    <dbReference type="NCBI Taxonomy" id="3702"/>
    <lineage>
        <taxon>Eukaryota</taxon>
        <taxon>Viridiplantae</taxon>
        <taxon>Streptophyta</taxon>
        <taxon>Embryophyta</taxon>
        <taxon>Tracheophyta</taxon>
        <taxon>Spermatophyta</taxon>
        <taxon>Magnoliopsida</taxon>
        <taxon>eudicotyledons</taxon>
        <taxon>Gunneridae</taxon>
        <taxon>Pentapetalae</taxon>
        <taxon>rosids</taxon>
        <taxon>malvids</taxon>
        <taxon>Brassicales</taxon>
        <taxon>Brassicaceae</taxon>
        <taxon>Camelineae</taxon>
        <taxon>Arabidopsis</taxon>
    </lineage>
</organism>
<reference key="1">
    <citation type="journal article" date="2000" name="Nature">
        <title>Sequence and analysis of chromosome 3 of the plant Arabidopsis thaliana.</title>
        <authorList>
            <person name="Salanoubat M."/>
            <person name="Lemcke K."/>
            <person name="Rieger M."/>
            <person name="Ansorge W."/>
            <person name="Unseld M."/>
            <person name="Fartmann B."/>
            <person name="Valle G."/>
            <person name="Bloecker H."/>
            <person name="Perez-Alonso M."/>
            <person name="Obermaier B."/>
            <person name="Delseny M."/>
            <person name="Boutry M."/>
            <person name="Grivell L.A."/>
            <person name="Mache R."/>
            <person name="Puigdomenech P."/>
            <person name="De Simone V."/>
            <person name="Choisne N."/>
            <person name="Artiguenave F."/>
            <person name="Robert C."/>
            <person name="Brottier P."/>
            <person name="Wincker P."/>
            <person name="Cattolico L."/>
            <person name="Weissenbach J."/>
            <person name="Saurin W."/>
            <person name="Quetier F."/>
            <person name="Schaefer M."/>
            <person name="Mueller-Auer S."/>
            <person name="Gabel C."/>
            <person name="Fuchs M."/>
            <person name="Benes V."/>
            <person name="Wurmbach E."/>
            <person name="Drzonek H."/>
            <person name="Erfle H."/>
            <person name="Jordan N."/>
            <person name="Bangert S."/>
            <person name="Wiedelmann R."/>
            <person name="Kranz H."/>
            <person name="Voss H."/>
            <person name="Holland R."/>
            <person name="Brandt P."/>
            <person name="Nyakatura G."/>
            <person name="Vezzi A."/>
            <person name="D'Angelo M."/>
            <person name="Pallavicini A."/>
            <person name="Toppo S."/>
            <person name="Simionati B."/>
            <person name="Conrad A."/>
            <person name="Hornischer K."/>
            <person name="Kauer G."/>
            <person name="Loehnert T.-H."/>
            <person name="Nordsiek G."/>
            <person name="Reichelt J."/>
            <person name="Scharfe M."/>
            <person name="Schoen O."/>
            <person name="Bargues M."/>
            <person name="Terol J."/>
            <person name="Climent J."/>
            <person name="Navarro P."/>
            <person name="Collado C."/>
            <person name="Perez-Perez A."/>
            <person name="Ottenwaelder B."/>
            <person name="Duchemin D."/>
            <person name="Cooke R."/>
            <person name="Laudie M."/>
            <person name="Berger-Llauro C."/>
            <person name="Purnelle B."/>
            <person name="Masuy D."/>
            <person name="de Haan M."/>
            <person name="Maarse A.C."/>
            <person name="Alcaraz J.-P."/>
            <person name="Cottet A."/>
            <person name="Casacuberta E."/>
            <person name="Monfort A."/>
            <person name="Argiriou A."/>
            <person name="Flores M."/>
            <person name="Liguori R."/>
            <person name="Vitale D."/>
            <person name="Mannhaupt G."/>
            <person name="Haase D."/>
            <person name="Schoof H."/>
            <person name="Rudd S."/>
            <person name="Zaccaria P."/>
            <person name="Mewes H.-W."/>
            <person name="Mayer K.F.X."/>
            <person name="Kaul S."/>
            <person name="Town C.D."/>
            <person name="Koo H.L."/>
            <person name="Tallon L.J."/>
            <person name="Jenkins J."/>
            <person name="Rooney T."/>
            <person name="Rizzo M."/>
            <person name="Walts A."/>
            <person name="Utterback T."/>
            <person name="Fujii C.Y."/>
            <person name="Shea T.P."/>
            <person name="Creasy T.H."/>
            <person name="Haas B."/>
            <person name="Maiti R."/>
            <person name="Wu D."/>
            <person name="Peterson J."/>
            <person name="Van Aken S."/>
            <person name="Pai G."/>
            <person name="Militscher J."/>
            <person name="Sellers P."/>
            <person name="Gill J.E."/>
            <person name="Feldblyum T.V."/>
            <person name="Preuss D."/>
            <person name="Lin X."/>
            <person name="Nierman W.C."/>
            <person name="Salzberg S.L."/>
            <person name="White O."/>
            <person name="Venter J.C."/>
            <person name="Fraser C.M."/>
            <person name="Kaneko T."/>
            <person name="Nakamura Y."/>
            <person name="Sato S."/>
            <person name="Kato T."/>
            <person name="Asamizu E."/>
            <person name="Sasamoto S."/>
            <person name="Kimura T."/>
            <person name="Idesawa K."/>
            <person name="Kawashima K."/>
            <person name="Kishida Y."/>
            <person name="Kiyokawa C."/>
            <person name="Kohara M."/>
            <person name="Matsumoto M."/>
            <person name="Matsuno A."/>
            <person name="Muraki A."/>
            <person name="Nakayama S."/>
            <person name="Nakazaki N."/>
            <person name="Shinpo S."/>
            <person name="Takeuchi C."/>
            <person name="Wada T."/>
            <person name="Watanabe A."/>
            <person name="Yamada M."/>
            <person name="Yasuda M."/>
            <person name="Tabata S."/>
        </authorList>
    </citation>
    <scope>NUCLEOTIDE SEQUENCE [LARGE SCALE GENOMIC DNA]</scope>
    <source>
        <strain>cv. Columbia</strain>
    </source>
</reference>
<reference key="2">
    <citation type="journal article" date="2017" name="Plant J.">
        <title>Araport11: a complete reannotation of the Arabidopsis thaliana reference genome.</title>
        <authorList>
            <person name="Cheng C.Y."/>
            <person name="Krishnakumar V."/>
            <person name="Chan A.P."/>
            <person name="Thibaud-Nissen F."/>
            <person name="Schobel S."/>
            <person name="Town C.D."/>
        </authorList>
    </citation>
    <scope>GENOME REANNOTATION</scope>
    <source>
        <strain>cv. Columbia</strain>
    </source>
</reference>
<name>PRNL4_ARATH</name>
<protein>
    <recommendedName>
        <fullName>Putative pirin-like protein At3g59260</fullName>
    </recommendedName>
</protein>